<name>PDXA_BRADU</name>
<evidence type="ECO:0000255" key="1">
    <source>
        <dbReference type="HAMAP-Rule" id="MF_00536"/>
    </source>
</evidence>
<protein>
    <recommendedName>
        <fullName evidence="1">4-hydroxythreonine-4-phosphate dehydrogenase</fullName>
        <ecNumber evidence="1">1.1.1.262</ecNumber>
    </recommendedName>
    <alternativeName>
        <fullName evidence="1">4-(phosphohydroxy)-L-threonine dehydrogenase</fullName>
    </alternativeName>
</protein>
<gene>
    <name evidence="1" type="primary">pdxA</name>
    <name type="ordered locus">bll4103</name>
</gene>
<organism>
    <name type="scientific">Bradyrhizobium diazoefficiens (strain JCM 10833 / BCRC 13528 / IAM 13628 / NBRC 14792 / USDA 110)</name>
    <dbReference type="NCBI Taxonomy" id="224911"/>
    <lineage>
        <taxon>Bacteria</taxon>
        <taxon>Pseudomonadati</taxon>
        <taxon>Pseudomonadota</taxon>
        <taxon>Alphaproteobacteria</taxon>
        <taxon>Hyphomicrobiales</taxon>
        <taxon>Nitrobacteraceae</taxon>
        <taxon>Bradyrhizobium</taxon>
    </lineage>
</organism>
<proteinExistence type="inferred from homology"/>
<accession>Q89MT9</accession>
<keyword id="KW-0170">Cobalt</keyword>
<keyword id="KW-0963">Cytoplasm</keyword>
<keyword id="KW-0460">Magnesium</keyword>
<keyword id="KW-0479">Metal-binding</keyword>
<keyword id="KW-0520">NAD</keyword>
<keyword id="KW-0521">NADP</keyword>
<keyword id="KW-0560">Oxidoreductase</keyword>
<keyword id="KW-0664">Pyridoxine biosynthesis</keyword>
<keyword id="KW-1185">Reference proteome</keyword>
<keyword id="KW-0862">Zinc</keyword>
<sequence>MANHAAKPLALTLGEPAGIGPDITIAGWLRRRELNLPAFYLLGDEALIARRAKTLDKTLGKALGAEIRIASVSAHEAAAAFTEALPVVATGERATAEPGQPDASSAPAALASIRQAVADVRAGRAGAVVTNPIAKSVLYRAGFRHPGHTEFLAELAAKDGRVPQPVMMLWSPRLAVVPVTIHVSLRDALSQLTSELIVSTVRIVATELKSRFGIARPRIAVSGLNPHAGEDGSLGHEEQTIIAPALKTLRNDGIDARGPLPADTMFHEAARSSYDCAVCMYHDQALIPIKTVAFDDAVNVTLGLPFIRTSPDHGTAFDIAGTGKANPASLIAALELASRMAAAKT</sequence>
<comment type="function">
    <text evidence="1">Catalyzes the NAD(P)-dependent oxidation of 4-(phosphooxy)-L-threonine (HTP) into 2-amino-3-oxo-4-(phosphooxy)butyric acid which spontaneously decarboxylates to form 3-amino-2-oxopropyl phosphate (AHAP).</text>
</comment>
<comment type="catalytic activity">
    <reaction evidence="1">
        <text>4-(phosphooxy)-L-threonine + NAD(+) = 3-amino-2-oxopropyl phosphate + CO2 + NADH</text>
        <dbReference type="Rhea" id="RHEA:32275"/>
        <dbReference type="ChEBI" id="CHEBI:16526"/>
        <dbReference type="ChEBI" id="CHEBI:57279"/>
        <dbReference type="ChEBI" id="CHEBI:57540"/>
        <dbReference type="ChEBI" id="CHEBI:57945"/>
        <dbReference type="ChEBI" id="CHEBI:58452"/>
        <dbReference type="EC" id="1.1.1.262"/>
    </reaction>
</comment>
<comment type="cofactor">
    <cofactor evidence="1">
        <name>Zn(2+)</name>
        <dbReference type="ChEBI" id="CHEBI:29105"/>
    </cofactor>
    <cofactor evidence="1">
        <name>Mg(2+)</name>
        <dbReference type="ChEBI" id="CHEBI:18420"/>
    </cofactor>
    <cofactor evidence="1">
        <name>Co(2+)</name>
        <dbReference type="ChEBI" id="CHEBI:48828"/>
    </cofactor>
    <text evidence="1">Binds 1 divalent metal cation per subunit. Can use ions such as Zn(2+), Mg(2+) or Co(2+).</text>
</comment>
<comment type="pathway">
    <text evidence="1">Cofactor biosynthesis; pyridoxine 5'-phosphate biosynthesis; pyridoxine 5'-phosphate from D-erythrose 4-phosphate: step 4/5.</text>
</comment>
<comment type="subunit">
    <text evidence="1">Homodimer.</text>
</comment>
<comment type="subcellular location">
    <subcellularLocation>
        <location evidence="1">Cytoplasm</location>
    </subcellularLocation>
</comment>
<comment type="miscellaneous">
    <text evidence="1">The active site is located at the dimer interface.</text>
</comment>
<comment type="similarity">
    <text evidence="1">Belongs to the PdxA family.</text>
</comment>
<reference key="1">
    <citation type="journal article" date="2002" name="DNA Res.">
        <title>Complete genomic sequence of nitrogen-fixing symbiotic bacterium Bradyrhizobium japonicum USDA110.</title>
        <authorList>
            <person name="Kaneko T."/>
            <person name="Nakamura Y."/>
            <person name="Sato S."/>
            <person name="Minamisawa K."/>
            <person name="Uchiumi T."/>
            <person name="Sasamoto S."/>
            <person name="Watanabe A."/>
            <person name="Idesawa K."/>
            <person name="Iriguchi M."/>
            <person name="Kawashima K."/>
            <person name="Kohara M."/>
            <person name="Matsumoto M."/>
            <person name="Shimpo S."/>
            <person name="Tsuruoka H."/>
            <person name="Wada T."/>
            <person name="Yamada M."/>
            <person name="Tabata S."/>
        </authorList>
    </citation>
    <scope>NUCLEOTIDE SEQUENCE [LARGE SCALE GENOMIC DNA]</scope>
    <source>
        <strain>JCM 10833 / BCRC 13528 / IAM 13628 / NBRC 14792 / USDA 110</strain>
    </source>
</reference>
<dbReference type="EC" id="1.1.1.262" evidence="1"/>
<dbReference type="EMBL" id="BA000040">
    <property type="protein sequence ID" value="BAC49368.1"/>
    <property type="molecule type" value="Genomic_DNA"/>
</dbReference>
<dbReference type="RefSeq" id="NP_770743.1">
    <property type="nucleotide sequence ID" value="NC_004463.1"/>
</dbReference>
<dbReference type="RefSeq" id="WP_011086877.1">
    <property type="nucleotide sequence ID" value="NC_004463.1"/>
</dbReference>
<dbReference type="SMR" id="Q89MT9"/>
<dbReference type="FunCoup" id="Q89MT9">
    <property type="interactions" value="348"/>
</dbReference>
<dbReference type="STRING" id="224911.AAV28_17545"/>
<dbReference type="EnsemblBacteria" id="BAC49368">
    <property type="protein sequence ID" value="BAC49368"/>
    <property type="gene ID" value="BAC49368"/>
</dbReference>
<dbReference type="KEGG" id="bja:bll4103"/>
<dbReference type="PATRIC" id="fig|224911.5.peg.4112"/>
<dbReference type="eggNOG" id="COG1995">
    <property type="taxonomic scope" value="Bacteria"/>
</dbReference>
<dbReference type="HOGENOM" id="CLU_040168_1_0_5"/>
<dbReference type="InParanoid" id="Q89MT9"/>
<dbReference type="OrthoDB" id="9801783at2"/>
<dbReference type="PhylomeDB" id="Q89MT9"/>
<dbReference type="UniPathway" id="UPA00244">
    <property type="reaction ID" value="UER00312"/>
</dbReference>
<dbReference type="Proteomes" id="UP000002526">
    <property type="component" value="Chromosome"/>
</dbReference>
<dbReference type="GO" id="GO:0005737">
    <property type="term" value="C:cytoplasm"/>
    <property type="evidence" value="ECO:0007669"/>
    <property type="project" value="UniProtKB-SubCell"/>
</dbReference>
<dbReference type="GO" id="GO:0050570">
    <property type="term" value="F:4-hydroxythreonine-4-phosphate dehydrogenase activity"/>
    <property type="evidence" value="ECO:0007669"/>
    <property type="project" value="UniProtKB-UniRule"/>
</dbReference>
<dbReference type="GO" id="GO:0050897">
    <property type="term" value="F:cobalt ion binding"/>
    <property type="evidence" value="ECO:0007669"/>
    <property type="project" value="UniProtKB-UniRule"/>
</dbReference>
<dbReference type="GO" id="GO:0000287">
    <property type="term" value="F:magnesium ion binding"/>
    <property type="evidence" value="ECO:0007669"/>
    <property type="project" value="UniProtKB-UniRule"/>
</dbReference>
<dbReference type="GO" id="GO:0051287">
    <property type="term" value="F:NAD binding"/>
    <property type="evidence" value="ECO:0007669"/>
    <property type="project" value="InterPro"/>
</dbReference>
<dbReference type="GO" id="GO:0008270">
    <property type="term" value="F:zinc ion binding"/>
    <property type="evidence" value="ECO:0007669"/>
    <property type="project" value="UniProtKB-UniRule"/>
</dbReference>
<dbReference type="GO" id="GO:0042823">
    <property type="term" value="P:pyridoxal phosphate biosynthetic process"/>
    <property type="evidence" value="ECO:0007669"/>
    <property type="project" value="UniProtKB-UniRule"/>
</dbReference>
<dbReference type="GO" id="GO:0008615">
    <property type="term" value="P:pyridoxine biosynthetic process"/>
    <property type="evidence" value="ECO:0007669"/>
    <property type="project" value="UniProtKB-UniRule"/>
</dbReference>
<dbReference type="Gene3D" id="3.40.718.10">
    <property type="entry name" value="Isopropylmalate Dehydrogenase"/>
    <property type="match status" value="1"/>
</dbReference>
<dbReference type="HAMAP" id="MF_00536">
    <property type="entry name" value="PdxA"/>
    <property type="match status" value="1"/>
</dbReference>
<dbReference type="InterPro" id="IPR037510">
    <property type="entry name" value="PdxA"/>
</dbReference>
<dbReference type="InterPro" id="IPR005255">
    <property type="entry name" value="PdxA_fam"/>
</dbReference>
<dbReference type="NCBIfam" id="TIGR00557">
    <property type="entry name" value="pdxA"/>
    <property type="match status" value="1"/>
</dbReference>
<dbReference type="NCBIfam" id="NF003699">
    <property type="entry name" value="PRK05312.1"/>
    <property type="match status" value="1"/>
</dbReference>
<dbReference type="PANTHER" id="PTHR30004">
    <property type="entry name" value="4-HYDROXYTHREONINE-4-PHOSPHATE DEHYDROGENASE"/>
    <property type="match status" value="1"/>
</dbReference>
<dbReference type="PANTHER" id="PTHR30004:SF6">
    <property type="entry name" value="D-THREONATE 4-PHOSPHATE DEHYDROGENASE"/>
    <property type="match status" value="1"/>
</dbReference>
<dbReference type="Pfam" id="PF04166">
    <property type="entry name" value="PdxA"/>
    <property type="match status" value="1"/>
</dbReference>
<dbReference type="SUPFAM" id="SSF53659">
    <property type="entry name" value="Isocitrate/Isopropylmalate dehydrogenase-like"/>
    <property type="match status" value="1"/>
</dbReference>
<feature type="chain" id="PRO_0000188799" description="4-hydroxythreonine-4-phosphate dehydrogenase">
    <location>
        <begin position="1"/>
        <end position="345"/>
    </location>
</feature>
<feature type="binding site" evidence="1">
    <location>
        <position position="148"/>
    </location>
    <ligand>
        <name>substrate</name>
    </ligand>
</feature>
<feature type="binding site" evidence="1">
    <location>
        <position position="149"/>
    </location>
    <ligand>
        <name>substrate</name>
    </ligand>
</feature>
<feature type="binding site" evidence="1">
    <location>
        <position position="182"/>
    </location>
    <ligand>
        <name>a divalent metal cation</name>
        <dbReference type="ChEBI" id="CHEBI:60240"/>
        <note>ligand shared between dimeric partners</note>
    </ligand>
</feature>
<feature type="binding site" evidence="1">
    <location>
        <position position="227"/>
    </location>
    <ligand>
        <name>a divalent metal cation</name>
        <dbReference type="ChEBI" id="CHEBI:60240"/>
        <note>ligand shared between dimeric partners</note>
    </ligand>
</feature>
<feature type="binding site" evidence="1">
    <location>
        <position position="282"/>
    </location>
    <ligand>
        <name>a divalent metal cation</name>
        <dbReference type="ChEBI" id="CHEBI:60240"/>
        <note>ligand shared between dimeric partners</note>
    </ligand>
</feature>
<feature type="binding site" evidence="1">
    <location>
        <position position="290"/>
    </location>
    <ligand>
        <name>substrate</name>
    </ligand>
</feature>
<feature type="binding site" evidence="1">
    <location>
        <position position="299"/>
    </location>
    <ligand>
        <name>substrate</name>
    </ligand>
</feature>
<feature type="binding site" evidence="1">
    <location>
        <position position="308"/>
    </location>
    <ligand>
        <name>substrate</name>
    </ligand>
</feature>